<feature type="chain" id="PRO_1000096965" description="3-methyl-2-oxobutanoate hydroxymethyltransferase">
    <location>
        <begin position="1"/>
        <end position="279"/>
    </location>
</feature>
<feature type="active site" description="Proton acceptor" evidence="1">
    <location>
        <position position="181"/>
    </location>
</feature>
<feature type="binding site" evidence="1">
    <location>
        <begin position="43"/>
        <end position="44"/>
    </location>
    <ligand>
        <name>3-methyl-2-oxobutanoate</name>
        <dbReference type="ChEBI" id="CHEBI:11851"/>
    </ligand>
</feature>
<feature type="binding site" evidence="1">
    <location>
        <position position="43"/>
    </location>
    <ligand>
        <name>Mg(2+)</name>
        <dbReference type="ChEBI" id="CHEBI:18420"/>
    </ligand>
</feature>
<feature type="binding site" evidence="1">
    <location>
        <position position="82"/>
    </location>
    <ligand>
        <name>3-methyl-2-oxobutanoate</name>
        <dbReference type="ChEBI" id="CHEBI:11851"/>
    </ligand>
</feature>
<feature type="binding site" evidence="1">
    <location>
        <position position="82"/>
    </location>
    <ligand>
        <name>Mg(2+)</name>
        <dbReference type="ChEBI" id="CHEBI:18420"/>
    </ligand>
</feature>
<feature type="binding site" evidence="1">
    <location>
        <position position="112"/>
    </location>
    <ligand>
        <name>3-methyl-2-oxobutanoate</name>
        <dbReference type="ChEBI" id="CHEBI:11851"/>
    </ligand>
</feature>
<feature type="binding site" evidence="1">
    <location>
        <position position="114"/>
    </location>
    <ligand>
        <name>Mg(2+)</name>
        <dbReference type="ChEBI" id="CHEBI:18420"/>
    </ligand>
</feature>
<proteinExistence type="inferred from homology"/>
<organism>
    <name type="scientific">Exiguobacterium sibiricum (strain DSM 17290 / CCUG 55495 / CIP 109462 / JCM 13490 / 255-15)</name>
    <dbReference type="NCBI Taxonomy" id="262543"/>
    <lineage>
        <taxon>Bacteria</taxon>
        <taxon>Bacillati</taxon>
        <taxon>Bacillota</taxon>
        <taxon>Bacilli</taxon>
        <taxon>Bacillales</taxon>
        <taxon>Bacillales Family XII. Incertae Sedis</taxon>
        <taxon>Exiguobacterium</taxon>
    </lineage>
</organism>
<sequence length="279" mass="29735">MHTMTPLLKKQQAGEKLVMLTAYDYPSAKLAEAGHVDLLLVGDSLGNVILGYDSTIAVTVDDMVHHAKAVRRGAPATFMVVDMPFASYHGSFDRTLEAAARIFQESGADALKLEGAGDILTTIRRLTEAGMPCVAHLGLTPQSVGVLEGFKVQGKSLAAAEQLIADSLAAEQAGAKMLVLECVPHPLAKRVQELLTIPVIGIGAGADVAGQVLVYHDILTYGVGRLPKFVKAYADWNTSGTEAIARYVEDVKNGTFPELAHSFLMDEELIGALYGGFKE</sequence>
<reference key="1">
    <citation type="submission" date="2008-04" db="EMBL/GenBank/DDBJ databases">
        <title>Complete sequence of chromosome of Exiguobacterium sibiricum 255-15.</title>
        <authorList>
            <consortium name="US DOE Joint Genome Institute"/>
            <person name="Copeland A."/>
            <person name="Lucas S."/>
            <person name="Lapidus A."/>
            <person name="Glavina del Rio T."/>
            <person name="Dalin E."/>
            <person name="Tice H."/>
            <person name="Bruce D."/>
            <person name="Goodwin L."/>
            <person name="Pitluck S."/>
            <person name="Kiss H."/>
            <person name="Chertkov O."/>
            <person name="Monk C."/>
            <person name="Brettin T."/>
            <person name="Detter J.C."/>
            <person name="Han C."/>
            <person name="Kuske C.R."/>
            <person name="Schmutz J."/>
            <person name="Larimer F."/>
            <person name="Land M."/>
            <person name="Hauser L."/>
            <person name="Kyrpides N."/>
            <person name="Mikhailova N."/>
            <person name="Vishnivetskaya T."/>
            <person name="Rodrigues D.F."/>
            <person name="Gilichinsky D."/>
            <person name="Tiedje J."/>
            <person name="Richardson P."/>
        </authorList>
    </citation>
    <scope>NUCLEOTIDE SEQUENCE [LARGE SCALE GENOMIC DNA]</scope>
    <source>
        <strain>DSM 17290 / CCUG 55495 / CIP 109462 / JCM 13490 / 255-15</strain>
    </source>
</reference>
<accession>B1YHQ9</accession>
<protein>
    <recommendedName>
        <fullName evidence="1">3-methyl-2-oxobutanoate hydroxymethyltransferase</fullName>
        <ecNumber evidence="1">2.1.2.11</ecNumber>
    </recommendedName>
    <alternativeName>
        <fullName evidence="1">Ketopantoate hydroxymethyltransferase</fullName>
        <shortName evidence="1">KPHMT</shortName>
    </alternativeName>
</protein>
<dbReference type="EC" id="2.1.2.11" evidence="1"/>
<dbReference type="EMBL" id="CP001022">
    <property type="protein sequence ID" value="ACB61232.1"/>
    <property type="molecule type" value="Genomic_DNA"/>
</dbReference>
<dbReference type="RefSeq" id="WP_012370650.1">
    <property type="nucleotide sequence ID" value="NC_010556.1"/>
</dbReference>
<dbReference type="SMR" id="B1YHQ9"/>
<dbReference type="STRING" id="262543.Exig_1780"/>
<dbReference type="KEGG" id="esi:Exig_1780"/>
<dbReference type="eggNOG" id="COG0413">
    <property type="taxonomic scope" value="Bacteria"/>
</dbReference>
<dbReference type="HOGENOM" id="CLU_036645_1_0_9"/>
<dbReference type="OrthoDB" id="9781789at2"/>
<dbReference type="UniPathway" id="UPA00028">
    <property type="reaction ID" value="UER00003"/>
</dbReference>
<dbReference type="Proteomes" id="UP000001681">
    <property type="component" value="Chromosome"/>
</dbReference>
<dbReference type="GO" id="GO:0005737">
    <property type="term" value="C:cytoplasm"/>
    <property type="evidence" value="ECO:0007669"/>
    <property type="project" value="UniProtKB-SubCell"/>
</dbReference>
<dbReference type="GO" id="GO:0003864">
    <property type="term" value="F:3-methyl-2-oxobutanoate hydroxymethyltransferase activity"/>
    <property type="evidence" value="ECO:0007669"/>
    <property type="project" value="UniProtKB-UniRule"/>
</dbReference>
<dbReference type="GO" id="GO:0000287">
    <property type="term" value="F:magnesium ion binding"/>
    <property type="evidence" value="ECO:0007669"/>
    <property type="project" value="TreeGrafter"/>
</dbReference>
<dbReference type="GO" id="GO:0015940">
    <property type="term" value="P:pantothenate biosynthetic process"/>
    <property type="evidence" value="ECO:0007669"/>
    <property type="project" value="UniProtKB-UniRule"/>
</dbReference>
<dbReference type="CDD" id="cd06557">
    <property type="entry name" value="KPHMT-like"/>
    <property type="match status" value="1"/>
</dbReference>
<dbReference type="FunFam" id="3.20.20.60:FF:000003">
    <property type="entry name" value="3-methyl-2-oxobutanoate hydroxymethyltransferase"/>
    <property type="match status" value="1"/>
</dbReference>
<dbReference type="Gene3D" id="3.20.20.60">
    <property type="entry name" value="Phosphoenolpyruvate-binding domains"/>
    <property type="match status" value="1"/>
</dbReference>
<dbReference type="HAMAP" id="MF_00156">
    <property type="entry name" value="PanB"/>
    <property type="match status" value="1"/>
</dbReference>
<dbReference type="InterPro" id="IPR003700">
    <property type="entry name" value="Pantoate_hydroxy_MeTrfase"/>
</dbReference>
<dbReference type="InterPro" id="IPR015813">
    <property type="entry name" value="Pyrv/PenolPyrv_kinase-like_dom"/>
</dbReference>
<dbReference type="InterPro" id="IPR040442">
    <property type="entry name" value="Pyrv_kinase-like_dom_sf"/>
</dbReference>
<dbReference type="NCBIfam" id="TIGR00222">
    <property type="entry name" value="panB"/>
    <property type="match status" value="1"/>
</dbReference>
<dbReference type="NCBIfam" id="NF001452">
    <property type="entry name" value="PRK00311.1"/>
    <property type="match status" value="1"/>
</dbReference>
<dbReference type="PANTHER" id="PTHR20881">
    <property type="entry name" value="3-METHYL-2-OXOBUTANOATE HYDROXYMETHYLTRANSFERASE"/>
    <property type="match status" value="1"/>
</dbReference>
<dbReference type="PANTHER" id="PTHR20881:SF0">
    <property type="entry name" value="3-METHYL-2-OXOBUTANOATE HYDROXYMETHYLTRANSFERASE"/>
    <property type="match status" value="1"/>
</dbReference>
<dbReference type="Pfam" id="PF02548">
    <property type="entry name" value="Pantoate_transf"/>
    <property type="match status" value="1"/>
</dbReference>
<dbReference type="PIRSF" id="PIRSF000388">
    <property type="entry name" value="Pantoate_hydroxy_MeTrfase"/>
    <property type="match status" value="1"/>
</dbReference>
<dbReference type="SUPFAM" id="SSF51621">
    <property type="entry name" value="Phosphoenolpyruvate/pyruvate domain"/>
    <property type="match status" value="1"/>
</dbReference>
<keyword id="KW-0963">Cytoplasm</keyword>
<keyword id="KW-0460">Magnesium</keyword>
<keyword id="KW-0479">Metal-binding</keyword>
<keyword id="KW-0566">Pantothenate biosynthesis</keyword>
<keyword id="KW-1185">Reference proteome</keyword>
<keyword id="KW-0808">Transferase</keyword>
<evidence type="ECO:0000255" key="1">
    <source>
        <dbReference type="HAMAP-Rule" id="MF_00156"/>
    </source>
</evidence>
<name>PANB_EXIS2</name>
<gene>
    <name evidence="1" type="primary">panB</name>
    <name type="ordered locus">Exig_1780</name>
</gene>
<comment type="function">
    <text evidence="1">Catalyzes the reversible reaction in which hydroxymethyl group from 5,10-methylenetetrahydrofolate is transferred onto alpha-ketoisovalerate to form ketopantoate.</text>
</comment>
<comment type="catalytic activity">
    <reaction evidence="1">
        <text>3-methyl-2-oxobutanoate + (6R)-5,10-methylene-5,6,7,8-tetrahydrofolate + H2O = 2-dehydropantoate + (6S)-5,6,7,8-tetrahydrofolate</text>
        <dbReference type="Rhea" id="RHEA:11824"/>
        <dbReference type="ChEBI" id="CHEBI:11561"/>
        <dbReference type="ChEBI" id="CHEBI:11851"/>
        <dbReference type="ChEBI" id="CHEBI:15377"/>
        <dbReference type="ChEBI" id="CHEBI:15636"/>
        <dbReference type="ChEBI" id="CHEBI:57453"/>
        <dbReference type="EC" id="2.1.2.11"/>
    </reaction>
</comment>
<comment type="cofactor">
    <cofactor evidence="1">
        <name>Mg(2+)</name>
        <dbReference type="ChEBI" id="CHEBI:18420"/>
    </cofactor>
    <text evidence="1">Binds 1 Mg(2+) ion per subunit.</text>
</comment>
<comment type="pathway">
    <text evidence="1">Cofactor biosynthesis; (R)-pantothenate biosynthesis; (R)-pantoate from 3-methyl-2-oxobutanoate: step 1/2.</text>
</comment>
<comment type="subunit">
    <text evidence="1">Homodecamer; pentamer of dimers.</text>
</comment>
<comment type="subcellular location">
    <subcellularLocation>
        <location evidence="1">Cytoplasm</location>
    </subcellularLocation>
</comment>
<comment type="similarity">
    <text evidence="1">Belongs to the PanB family.</text>
</comment>